<organism>
    <name type="scientific">Laribacter hongkongensis (strain HLHK9)</name>
    <dbReference type="NCBI Taxonomy" id="557598"/>
    <lineage>
        <taxon>Bacteria</taxon>
        <taxon>Pseudomonadati</taxon>
        <taxon>Pseudomonadota</taxon>
        <taxon>Betaproteobacteria</taxon>
        <taxon>Neisseriales</taxon>
        <taxon>Aquaspirillaceae</taxon>
        <taxon>Laribacter</taxon>
    </lineage>
</organism>
<accession>C1D4H9</accession>
<protein>
    <recommendedName>
        <fullName evidence="1">Protein RnfH</fullName>
    </recommendedName>
</protein>
<name>RNFH_LARHH</name>
<keyword id="KW-1185">Reference proteome</keyword>
<evidence type="ECO:0000255" key="1">
    <source>
        <dbReference type="HAMAP-Rule" id="MF_00460"/>
    </source>
</evidence>
<comment type="similarity">
    <text evidence="1">Belongs to the UPF0125 (RnfH) family.</text>
</comment>
<gene>
    <name evidence="1" type="primary">rnfH</name>
    <name type="ordered locus">LHK_00780</name>
</gene>
<sequence length="108" mass="11604">MATTDDISVEVAYALPERQSLVRLKVPAGTTARDAIGLSGLLDQYPGIDADTMKIGIFSRPVKADTVLREHDRVEIYRPLIADPKAVRRARAEAGKAMKKGGGDGDTP</sequence>
<dbReference type="EMBL" id="CP001154">
    <property type="protein sequence ID" value="ACO73773.1"/>
    <property type="molecule type" value="Genomic_DNA"/>
</dbReference>
<dbReference type="RefSeq" id="WP_012696265.1">
    <property type="nucleotide sequence ID" value="NC_012559.1"/>
</dbReference>
<dbReference type="SMR" id="C1D4H9"/>
<dbReference type="STRING" id="557598.LHK_00780"/>
<dbReference type="KEGG" id="lhk:LHK_00780"/>
<dbReference type="eggNOG" id="COG2914">
    <property type="taxonomic scope" value="Bacteria"/>
</dbReference>
<dbReference type="HOGENOM" id="CLU_150721_1_0_4"/>
<dbReference type="Proteomes" id="UP000002010">
    <property type="component" value="Chromosome"/>
</dbReference>
<dbReference type="Gene3D" id="3.10.20.280">
    <property type="entry name" value="RnfH-like"/>
    <property type="match status" value="1"/>
</dbReference>
<dbReference type="HAMAP" id="MF_00460">
    <property type="entry name" value="UPF0125_RnfH"/>
    <property type="match status" value="1"/>
</dbReference>
<dbReference type="InterPro" id="IPR016155">
    <property type="entry name" value="Mopterin_synth/thiamin_S_b"/>
</dbReference>
<dbReference type="InterPro" id="IPR005346">
    <property type="entry name" value="RnfH"/>
</dbReference>
<dbReference type="InterPro" id="IPR037021">
    <property type="entry name" value="RnfH_sf"/>
</dbReference>
<dbReference type="NCBIfam" id="NF002490">
    <property type="entry name" value="PRK01777.1"/>
    <property type="match status" value="1"/>
</dbReference>
<dbReference type="PANTHER" id="PTHR37483">
    <property type="entry name" value="UPF0125 PROTEIN RATB"/>
    <property type="match status" value="1"/>
</dbReference>
<dbReference type="PANTHER" id="PTHR37483:SF1">
    <property type="entry name" value="UPF0125 PROTEIN RATB"/>
    <property type="match status" value="1"/>
</dbReference>
<dbReference type="Pfam" id="PF03658">
    <property type="entry name" value="Ub-RnfH"/>
    <property type="match status" value="1"/>
</dbReference>
<dbReference type="SUPFAM" id="SSF54285">
    <property type="entry name" value="MoaD/ThiS"/>
    <property type="match status" value="1"/>
</dbReference>
<reference key="1">
    <citation type="journal article" date="2009" name="PLoS Genet.">
        <title>The complete genome and proteome of Laribacter hongkongensis reveal potential mechanisms for adaptations to different temperatures and habitats.</title>
        <authorList>
            <person name="Woo P.C.Y."/>
            <person name="Lau S.K.P."/>
            <person name="Tse H."/>
            <person name="Teng J.L.L."/>
            <person name="Curreem S.O."/>
            <person name="Tsang A.K.L."/>
            <person name="Fan R.Y.Y."/>
            <person name="Wong G.K.M."/>
            <person name="Huang Y."/>
            <person name="Loman N.J."/>
            <person name="Snyder L.A.S."/>
            <person name="Cai J.J."/>
            <person name="Huang J.-D."/>
            <person name="Mak W."/>
            <person name="Pallen M.J."/>
            <person name="Lok S."/>
            <person name="Yuen K.-Y."/>
        </authorList>
    </citation>
    <scope>NUCLEOTIDE SEQUENCE [LARGE SCALE GENOMIC DNA]</scope>
    <source>
        <strain>HLHK9</strain>
    </source>
</reference>
<proteinExistence type="inferred from homology"/>
<feature type="chain" id="PRO_1000200186" description="Protein RnfH">
    <location>
        <begin position="1"/>
        <end position="108"/>
    </location>
</feature>